<comment type="function">
    <text evidence="1">Catalyzes the methylthiolation of N6-(dimethylallyl)adenosine (i(6)A), leading to the formation of 2-methylthio-N6-(dimethylallyl)adenosine (ms(2)i(6)A) at position 37 in tRNAs that read codons beginning with uridine.</text>
</comment>
<comment type="catalytic activity">
    <reaction evidence="1">
        <text>N(6)-dimethylallyladenosine(37) in tRNA + (sulfur carrier)-SH + AH2 + 2 S-adenosyl-L-methionine = 2-methylsulfanyl-N(6)-dimethylallyladenosine(37) in tRNA + (sulfur carrier)-H + 5'-deoxyadenosine + L-methionine + A + S-adenosyl-L-homocysteine + 2 H(+)</text>
        <dbReference type="Rhea" id="RHEA:37067"/>
        <dbReference type="Rhea" id="RHEA-COMP:10375"/>
        <dbReference type="Rhea" id="RHEA-COMP:10376"/>
        <dbReference type="Rhea" id="RHEA-COMP:14737"/>
        <dbReference type="Rhea" id="RHEA-COMP:14739"/>
        <dbReference type="ChEBI" id="CHEBI:13193"/>
        <dbReference type="ChEBI" id="CHEBI:15378"/>
        <dbReference type="ChEBI" id="CHEBI:17319"/>
        <dbReference type="ChEBI" id="CHEBI:17499"/>
        <dbReference type="ChEBI" id="CHEBI:29917"/>
        <dbReference type="ChEBI" id="CHEBI:57844"/>
        <dbReference type="ChEBI" id="CHEBI:57856"/>
        <dbReference type="ChEBI" id="CHEBI:59789"/>
        <dbReference type="ChEBI" id="CHEBI:64428"/>
        <dbReference type="ChEBI" id="CHEBI:74415"/>
        <dbReference type="ChEBI" id="CHEBI:74417"/>
        <dbReference type="EC" id="2.8.4.3"/>
    </reaction>
</comment>
<comment type="cofactor">
    <cofactor evidence="1">
        <name>[4Fe-4S] cluster</name>
        <dbReference type="ChEBI" id="CHEBI:49883"/>
    </cofactor>
    <text evidence="1">Binds 2 [4Fe-4S] clusters. One cluster is coordinated with 3 cysteines and an exchangeable S-adenosyl-L-methionine.</text>
</comment>
<comment type="subunit">
    <text evidence="1">Monomer.</text>
</comment>
<comment type="subcellular location">
    <subcellularLocation>
        <location evidence="1">Cytoplasm</location>
    </subcellularLocation>
</comment>
<comment type="similarity">
    <text evidence="1">Belongs to the methylthiotransferase family. MiaB subfamily.</text>
</comment>
<feature type="chain" id="PRO_0000374364" description="tRNA-2-methylthio-N(6)-dimethylallyladenosine synthase">
    <location>
        <begin position="1"/>
        <end position="469"/>
    </location>
</feature>
<feature type="domain" description="MTTase N-terminal" evidence="1">
    <location>
        <begin position="27"/>
        <end position="142"/>
    </location>
</feature>
<feature type="domain" description="Radical SAM core" evidence="2">
    <location>
        <begin position="165"/>
        <end position="398"/>
    </location>
</feature>
<feature type="domain" description="TRAM" evidence="1">
    <location>
        <begin position="401"/>
        <end position="467"/>
    </location>
</feature>
<feature type="binding site" evidence="1">
    <location>
        <position position="36"/>
    </location>
    <ligand>
        <name>[4Fe-4S] cluster</name>
        <dbReference type="ChEBI" id="CHEBI:49883"/>
        <label>1</label>
    </ligand>
</feature>
<feature type="binding site" evidence="1">
    <location>
        <position position="73"/>
    </location>
    <ligand>
        <name>[4Fe-4S] cluster</name>
        <dbReference type="ChEBI" id="CHEBI:49883"/>
        <label>1</label>
    </ligand>
</feature>
<feature type="binding site" evidence="1">
    <location>
        <position position="105"/>
    </location>
    <ligand>
        <name>[4Fe-4S] cluster</name>
        <dbReference type="ChEBI" id="CHEBI:49883"/>
        <label>1</label>
    </ligand>
</feature>
<feature type="binding site" evidence="1">
    <location>
        <position position="179"/>
    </location>
    <ligand>
        <name>[4Fe-4S] cluster</name>
        <dbReference type="ChEBI" id="CHEBI:49883"/>
        <label>2</label>
        <note>4Fe-4S-S-AdoMet</note>
    </ligand>
</feature>
<feature type="binding site" evidence="1">
    <location>
        <position position="183"/>
    </location>
    <ligand>
        <name>[4Fe-4S] cluster</name>
        <dbReference type="ChEBI" id="CHEBI:49883"/>
        <label>2</label>
        <note>4Fe-4S-S-AdoMet</note>
    </ligand>
</feature>
<feature type="binding site" evidence="1">
    <location>
        <position position="186"/>
    </location>
    <ligand>
        <name>[4Fe-4S] cluster</name>
        <dbReference type="ChEBI" id="CHEBI:49883"/>
        <label>2</label>
        <note>4Fe-4S-S-AdoMet</note>
    </ligand>
</feature>
<organism>
    <name type="scientific">Leptothrix cholodnii (strain ATCC 51168 / LMG 8142 / SP-6)</name>
    <name type="common">Leptothrix discophora (strain SP-6)</name>
    <dbReference type="NCBI Taxonomy" id="395495"/>
    <lineage>
        <taxon>Bacteria</taxon>
        <taxon>Pseudomonadati</taxon>
        <taxon>Pseudomonadota</taxon>
        <taxon>Betaproteobacteria</taxon>
        <taxon>Burkholderiales</taxon>
        <taxon>Sphaerotilaceae</taxon>
        <taxon>Leptothrix</taxon>
    </lineage>
</organism>
<gene>
    <name evidence="1" type="primary">miaB</name>
    <name type="ordered locus">Lcho_0584</name>
</gene>
<evidence type="ECO:0000255" key="1">
    <source>
        <dbReference type="HAMAP-Rule" id="MF_01864"/>
    </source>
</evidence>
<evidence type="ECO:0000255" key="2">
    <source>
        <dbReference type="PROSITE-ProRule" id="PRU01266"/>
    </source>
</evidence>
<protein>
    <recommendedName>
        <fullName evidence="1">tRNA-2-methylthio-N(6)-dimethylallyladenosine synthase</fullName>
        <ecNumber evidence="1">2.8.4.3</ecNumber>
    </recommendedName>
    <alternativeName>
        <fullName evidence="1">(Dimethylallyl)adenosine tRNA methylthiotransferase MiaB</fullName>
    </alternativeName>
    <alternativeName>
        <fullName evidence="1">tRNA-i(6)A37 methylthiotransferase</fullName>
    </alternativeName>
</protein>
<sequence>MHTPTLTSTPTTATSVVDDTAPAASGKKVYIRTFGCQMNEYDSDKMSDVMAAAEGYTPTDDPEQADLILFNTCSVREKAQEKVFSDLGRVKHLKARGVLIGVGGCVASQEGAAIIERAPYVDVVFGPQTLHRLPQMLAQRARQGRPQVDISFPEIEKFDHLPPAKVDGAAAFVSIMEGCSKYCSYCVVPYTRGEEFSRPFDEVLTEVAGLADQGVKEVTLLGQNVNAYRGRMGDTSDIADFATLLEYVHEIPGIERIRYTTSHPNEFTPALIEAYARLPKLVNHLHLPVQHGSDRILSGMKRGYTVLEYKSTIRKLRAIRPDISLSTDFIVGFPGETDDDHARTMKLIDDIGFDASFSFIFSPRPGTPAAALHDDTSYEVKLARLQQLQATIEDNVRRISERRVGTVQRVLVEGPSRRDPNELMGRTECNRIVNFDGGPNAARLVGRMIDIRITLAYPHSLRGEPVLRD</sequence>
<accession>B1XYX5</accession>
<keyword id="KW-0004">4Fe-4S</keyword>
<keyword id="KW-0963">Cytoplasm</keyword>
<keyword id="KW-0408">Iron</keyword>
<keyword id="KW-0411">Iron-sulfur</keyword>
<keyword id="KW-0479">Metal-binding</keyword>
<keyword id="KW-1185">Reference proteome</keyword>
<keyword id="KW-0949">S-adenosyl-L-methionine</keyword>
<keyword id="KW-0808">Transferase</keyword>
<keyword id="KW-0819">tRNA processing</keyword>
<reference key="1">
    <citation type="submission" date="2008-03" db="EMBL/GenBank/DDBJ databases">
        <title>Complete sequence of Leptothrix cholodnii SP-6.</title>
        <authorList>
            <consortium name="US DOE Joint Genome Institute"/>
            <person name="Copeland A."/>
            <person name="Lucas S."/>
            <person name="Lapidus A."/>
            <person name="Glavina del Rio T."/>
            <person name="Dalin E."/>
            <person name="Tice H."/>
            <person name="Bruce D."/>
            <person name="Goodwin L."/>
            <person name="Pitluck S."/>
            <person name="Chertkov O."/>
            <person name="Brettin T."/>
            <person name="Detter J.C."/>
            <person name="Han C."/>
            <person name="Kuske C.R."/>
            <person name="Schmutz J."/>
            <person name="Larimer F."/>
            <person name="Land M."/>
            <person name="Hauser L."/>
            <person name="Kyrpides N."/>
            <person name="Lykidis A."/>
            <person name="Emerson D."/>
            <person name="Richardson P."/>
        </authorList>
    </citation>
    <scope>NUCLEOTIDE SEQUENCE [LARGE SCALE GENOMIC DNA]</scope>
    <source>
        <strain>ATCC 51168 / LMG 8142 / SP-6</strain>
    </source>
</reference>
<name>MIAB_LEPCP</name>
<dbReference type="EC" id="2.8.4.3" evidence="1"/>
<dbReference type="EMBL" id="CP001013">
    <property type="protein sequence ID" value="ACB32859.1"/>
    <property type="molecule type" value="Genomic_DNA"/>
</dbReference>
<dbReference type="RefSeq" id="WP_012345621.1">
    <property type="nucleotide sequence ID" value="NC_010524.1"/>
</dbReference>
<dbReference type="SMR" id="B1XYX5"/>
<dbReference type="STRING" id="395495.Lcho_0584"/>
<dbReference type="KEGG" id="lch:Lcho_0584"/>
<dbReference type="eggNOG" id="COG0621">
    <property type="taxonomic scope" value="Bacteria"/>
</dbReference>
<dbReference type="HOGENOM" id="CLU_018697_2_0_4"/>
<dbReference type="OrthoDB" id="9805215at2"/>
<dbReference type="Proteomes" id="UP000001693">
    <property type="component" value="Chromosome"/>
</dbReference>
<dbReference type="GO" id="GO:0005829">
    <property type="term" value="C:cytosol"/>
    <property type="evidence" value="ECO:0007669"/>
    <property type="project" value="TreeGrafter"/>
</dbReference>
<dbReference type="GO" id="GO:0051539">
    <property type="term" value="F:4 iron, 4 sulfur cluster binding"/>
    <property type="evidence" value="ECO:0007669"/>
    <property type="project" value="UniProtKB-UniRule"/>
</dbReference>
<dbReference type="GO" id="GO:0046872">
    <property type="term" value="F:metal ion binding"/>
    <property type="evidence" value="ECO:0007669"/>
    <property type="project" value="UniProtKB-KW"/>
</dbReference>
<dbReference type="GO" id="GO:0035597">
    <property type="term" value="F:N6-isopentenyladenosine methylthiotransferase activity"/>
    <property type="evidence" value="ECO:0007669"/>
    <property type="project" value="TreeGrafter"/>
</dbReference>
<dbReference type="CDD" id="cd01335">
    <property type="entry name" value="Radical_SAM"/>
    <property type="match status" value="1"/>
</dbReference>
<dbReference type="FunFam" id="3.40.50.12160:FF:000001">
    <property type="entry name" value="tRNA-2-methylthio-N(6)-dimethylallyladenosine synthase"/>
    <property type="match status" value="1"/>
</dbReference>
<dbReference type="FunFam" id="3.80.30.20:FF:000001">
    <property type="entry name" value="tRNA-2-methylthio-N(6)-dimethylallyladenosine synthase 2"/>
    <property type="match status" value="1"/>
</dbReference>
<dbReference type="Gene3D" id="3.40.50.12160">
    <property type="entry name" value="Methylthiotransferase, N-terminal domain"/>
    <property type="match status" value="1"/>
</dbReference>
<dbReference type="Gene3D" id="3.80.30.20">
    <property type="entry name" value="tm_1862 like domain"/>
    <property type="match status" value="1"/>
</dbReference>
<dbReference type="HAMAP" id="MF_01864">
    <property type="entry name" value="tRNA_metthiotr_MiaB"/>
    <property type="match status" value="1"/>
</dbReference>
<dbReference type="InterPro" id="IPR006638">
    <property type="entry name" value="Elp3/MiaA/NifB-like_rSAM"/>
</dbReference>
<dbReference type="InterPro" id="IPR005839">
    <property type="entry name" value="Methylthiotransferase"/>
</dbReference>
<dbReference type="InterPro" id="IPR020612">
    <property type="entry name" value="Methylthiotransferase_CS"/>
</dbReference>
<dbReference type="InterPro" id="IPR013848">
    <property type="entry name" value="Methylthiotransferase_N"/>
</dbReference>
<dbReference type="InterPro" id="IPR038135">
    <property type="entry name" value="Methylthiotransferase_N_sf"/>
</dbReference>
<dbReference type="InterPro" id="IPR006463">
    <property type="entry name" value="MiaB_methiolase"/>
</dbReference>
<dbReference type="InterPro" id="IPR007197">
    <property type="entry name" value="rSAM"/>
</dbReference>
<dbReference type="InterPro" id="IPR023404">
    <property type="entry name" value="rSAM_horseshoe"/>
</dbReference>
<dbReference type="InterPro" id="IPR002792">
    <property type="entry name" value="TRAM_dom"/>
</dbReference>
<dbReference type="NCBIfam" id="TIGR01574">
    <property type="entry name" value="miaB-methiolase"/>
    <property type="match status" value="1"/>
</dbReference>
<dbReference type="NCBIfam" id="TIGR00089">
    <property type="entry name" value="MiaB/RimO family radical SAM methylthiotransferase"/>
    <property type="match status" value="1"/>
</dbReference>
<dbReference type="PANTHER" id="PTHR43020">
    <property type="entry name" value="CDK5 REGULATORY SUBUNIT-ASSOCIATED PROTEIN 1"/>
    <property type="match status" value="1"/>
</dbReference>
<dbReference type="PANTHER" id="PTHR43020:SF2">
    <property type="entry name" value="MITOCHONDRIAL TRNA METHYLTHIOTRANSFERASE CDK5RAP1"/>
    <property type="match status" value="1"/>
</dbReference>
<dbReference type="Pfam" id="PF04055">
    <property type="entry name" value="Radical_SAM"/>
    <property type="match status" value="1"/>
</dbReference>
<dbReference type="Pfam" id="PF01938">
    <property type="entry name" value="TRAM"/>
    <property type="match status" value="1"/>
</dbReference>
<dbReference type="Pfam" id="PF00919">
    <property type="entry name" value="UPF0004"/>
    <property type="match status" value="1"/>
</dbReference>
<dbReference type="SFLD" id="SFLDF00273">
    <property type="entry name" value="(dimethylallyl)adenosine_tRNA"/>
    <property type="match status" value="1"/>
</dbReference>
<dbReference type="SFLD" id="SFLDG01082">
    <property type="entry name" value="B12-binding_domain_containing"/>
    <property type="match status" value="1"/>
</dbReference>
<dbReference type="SFLD" id="SFLDS00029">
    <property type="entry name" value="Radical_SAM"/>
    <property type="match status" value="1"/>
</dbReference>
<dbReference type="SMART" id="SM00729">
    <property type="entry name" value="Elp3"/>
    <property type="match status" value="1"/>
</dbReference>
<dbReference type="SUPFAM" id="SSF102114">
    <property type="entry name" value="Radical SAM enzymes"/>
    <property type="match status" value="1"/>
</dbReference>
<dbReference type="PROSITE" id="PS51449">
    <property type="entry name" value="MTTASE_N"/>
    <property type="match status" value="1"/>
</dbReference>
<dbReference type="PROSITE" id="PS01278">
    <property type="entry name" value="MTTASE_RADICAL"/>
    <property type="match status" value="1"/>
</dbReference>
<dbReference type="PROSITE" id="PS51918">
    <property type="entry name" value="RADICAL_SAM"/>
    <property type="match status" value="1"/>
</dbReference>
<dbReference type="PROSITE" id="PS50926">
    <property type="entry name" value="TRAM"/>
    <property type="match status" value="1"/>
</dbReference>
<proteinExistence type="inferred from homology"/>